<keyword id="KW-0131">Cell cycle</keyword>
<keyword id="KW-0132">Cell division</keyword>
<keyword id="KW-0433">Leucine-rich repeat</keyword>
<keyword id="KW-0498">Mitosis</keyword>
<keyword id="KW-0539">Nucleus</keyword>
<keyword id="KW-0597">Phosphoprotein</keyword>
<keyword id="KW-1185">Reference proteome</keyword>
<keyword id="KW-0677">Repeat</keyword>
<name>SDS22_SCHPO</name>
<evidence type="ECO:0000305" key="1"/>
<organism>
    <name type="scientific">Schizosaccharomyces pombe (strain 972 / ATCC 24843)</name>
    <name type="common">Fission yeast</name>
    <dbReference type="NCBI Taxonomy" id="284812"/>
    <lineage>
        <taxon>Eukaryota</taxon>
        <taxon>Fungi</taxon>
        <taxon>Dikarya</taxon>
        <taxon>Ascomycota</taxon>
        <taxon>Taphrinomycotina</taxon>
        <taxon>Schizosaccharomycetes</taxon>
        <taxon>Schizosaccharomycetales</taxon>
        <taxon>Schizosaccharomycetaceae</taxon>
        <taxon>Schizosaccharomyces</taxon>
    </lineage>
</organism>
<dbReference type="EMBL" id="M57495">
    <property type="protein sequence ID" value="AAA35342.1"/>
    <property type="status" value="ALT_INIT"/>
    <property type="molecule type" value="Genomic_DNA"/>
</dbReference>
<dbReference type="EMBL" id="CU329670">
    <property type="protein sequence ID" value="CAB11482.1"/>
    <property type="molecule type" value="Genomic_DNA"/>
</dbReference>
<dbReference type="PIR" id="S43988">
    <property type="entry name" value="S43988"/>
</dbReference>
<dbReference type="RefSeq" id="NP_593824.1">
    <property type="nucleotide sequence ID" value="NM_001019253.2"/>
</dbReference>
<dbReference type="SMR" id="P22194"/>
<dbReference type="BioGRID" id="280012">
    <property type="interactions" value="6"/>
</dbReference>
<dbReference type="DIP" id="DIP-61475N"/>
<dbReference type="FunCoup" id="P22194">
    <property type="interactions" value="345"/>
</dbReference>
<dbReference type="IntAct" id="P22194">
    <property type="interactions" value="1"/>
</dbReference>
<dbReference type="STRING" id="284812.P22194"/>
<dbReference type="MEROPS" id="X28.001"/>
<dbReference type="PaxDb" id="4896-SPAC4A8.12c.1"/>
<dbReference type="EnsemblFungi" id="SPAC4A8.12c.1">
    <property type="protein sequence ID" value="SPAC4A8.12c.1:pep"/>
    <property type="gene ID" value="SPAC4A8.12c"/>
</dbReference>
<dbReference type="GeneID" id="2543597"/>
<dbReference type="KEGG" id="spo:2543597"/>
<dbReference type="PomBase" id="SPAC4A8.12c">
    <property type="gene designation" value="sds22"/>
</dbReference>
<dbReference type="VEuPathDB" id="FungiDB:SPAC4A8.12c"/>
<dbReference type="eggNOG" id="KOG0531">
    <property type="taxonomic scope" value="Eukaryota"/>
</dbReference>
<dbReference type="HOGENOM" id="CLU_044236_0_0_1"/>
<dbReference type="InParanoid" id="P22194"/>
<dbReference type="OMA" id="EVWASYN"/>
<dbReference type="PhylomeDB" id="P22194"/>
<dbReference type="PRO" id="PR:P22194"/>
<dbReference type="Proteomes" id="UP000002485">
    <property type="component" value="Chromosome I"/>
</dbReference>
<dbReference type="GO" id="GO:0005737">
    <property type="term" value="C:cytoplasm"/>
    <property type="evidence" value="ECO:0000314"/>
    <property type="project" value="PomBase"/>
</dbReference>
<dbReference type="GO" id="GO:0005829">
    <property type="term" value="C:cytosol"/>
    <property type="evidence" value="ECO:0007005"/>
    <property type="project" value="PomBase"/>
</dbReference>
<dbReference type="GO" id="GO:0005634">
    <property type="term" value="C:nucleus"/>
    <property type="evidence" value="ECO:0000314"/>
    <property type="project" value="PomBase"/>
</dbReference>
<dbReference type="GO" id="GO:0072357">
    <property type="term" value="C:PTW/PP1 phosphatase complex"/>
    <property type="evidence" value="ECO:0000353"/>
    <property type="project" value="PomBase"/>
</dbReference>
<dbReference type="GO" id="GO:0072542">
    <property type="term" value="F:protein phosphatase activator activity"/>
    <property type="evidence" value="ECO:0000316"/>
    <property type="project" value="PomBase"/>
</dbReference>
<dbReference type="GO" id="GO:0019888">
    <property type="term" value="F:protein phosphatase regulator activity"/>
    <property type="evidence" value="ECO:0000353"/>
    <property type="project" value="PomBase"/>
</dbReference>
<dbReference type="GO" id="GO:0051301">
    <property type="term" value="P:cell division"/>
    <property type="evidence" value="ECO:0007669"/>
    <property type="project" value="UniProtKB-KW"/>
</dbReference>
<dbReference type="GO" id="GO:0045842">
    <property type="term" value="P:positive regulation of mitotic metaphase/anaphase transition"/>
    <property type="evidence" value="ECO:0000315"/>
    <property type="project" value="PomBase"/>
</dbReference>
<dbReference type="GO" id="GO:1901970">
    <property type="term" value="P:positive regulation of mitotic sister chromatid separation"/>
    <property type="evidence" value="ECO:0000315"/>
    <property type="project" value="PomBase"/>
</dbReference>
<dbReference type="GO" id="GO:0023052">
    <property type="term" value="P:signaling"/>
    <property type="evidence" value="ECO:0000303"/>
    <property type="project" value="PomBase"/>
</dbReference>
<dbReference type="FunFam" id="3.80.10.10:FF:000961">
    <property type="entry name" value="Protein phosphatase PP1 regulatory subunit sds22"/>
    <property type="match status" value="1"/>
</dbReference>
<dbReference type="FunFam" id="3.80.10.10:FF:001078">
    <property type="entry name" value="Protein phosphatase PP1 regulatory subunit sds22"/>
    <property type="match status" value="1"/>
</dbReference>
<dbReference type="Gene3D" id="3.80.10.10">
    <property type="entry name" value="Ribonuclease Inhibitor"/>
    <property type="match status" value="3"/>
</dbReference>
<dbReference type="InterPro" id="IPR050576">
    <property type="entry name" value="Cilia_flagella_integrity"/>
</dbReference>
<dbReference type="InterPro" id="IPR001611">
    <property type="entry name" value="Leu-rich_rpt"/>
</dbReference>
<dbReference type="InterPro" id="IPR025875">
    <property type="entry name" value="Leu-rich_rpt_4"/>
</dbReference>
<dbReference type="InterPro" id="IPR003591">
    <property type="entry name" value="Leu-rich_rpt_typical-subtyp"/>
</dbReference>
<dbReference type="InterPro" id="IPR032675">
    <property type="entry name" value="LRR_dom_sf"/>
</dbReference>
<dbReference type="InterPro" id="IPR003603">
    <property type="entry name" value="U2A'_phosphoprotein32A_C"/>
</dbReference>
<dbReference type="PANTHER" id="PTHR45973:SF23">
    <property type="entry name" value="PROTEIN PHOSPHATASE 1 REGULATORY SUBUNIT 7"/>
    <property type="match status" value="1"/>
</dbReference>
<dbReference type="PANTHER" id="PTHR45973">
    <property type="entry name" value="PROTEIN PHOSPHATASE 1 REGULATORY SUBUNIT SDS22-RELATED"/>
    <property type="match status" value="1"/>
</dbReference>
<dbReference type="Pfam" id="PF12799">
    <property type="entry name" value="LRR_4"/>
    <property type="match status" value="1"/>
</dbReference>
<dbReference type="Pfam" id="PF14580">
    <property type="entry name" value="LRR_9"/>
    <property type="match status" value="1"/>
</dbReference>
<dbReference type="PRINTS" id="PR00019">
    <property type="entry name" value="LEURICHRPT"/>
</dbReference>
<dbReference type="SMART" id="SM00365">
    <property type="entry name" value="LRR_SD22"/>
    <property type="match status" value="10"/>
</dbReference>
<dbReference type="SMART" id="SM00369">
    <property type="entry name" value="LRR_TYP"/>
    <property type="match status" value="6"/>
</dbReference>
<dbReference type="SMART" id="SM00446">
    <property type="entry name" value="LRRcap"/>
    <property type="match status" value="1"/>
</dbReference>
<dbReference type="SUPFAM" id="SSF52058">
    <property type="entry name" value="L domain-like"/>
    <property type="match status" value="1"/>
</dbReference>
<dbReference type="PROSITE" id="PS51450">
    <property type="entry name" value="LRR"/>
    <property type="match status" value="10"/>
</dbReference>
<accession>P22194</accession>
<gene>
    <name type="primary">sds22</name>
    <name type="ORF">SPAC4A8.12c</name>
</gene>
<reference key="1">
    <citation type="journal article" date="1991" name="Cell">
        <title>S. pombe gene sds22+ essential for a midmitotic transition encodes a leucine-rich repeat protein that positively modulates protein phosphatase-1.</title>
        <authorList>
            <person name="Ohkura H."/>
            <person name="Yanagida M."/>
        </authorList>
    </citation>
    <scope>NUCLEOTIDE SEQUENCE [GENOMIC DNA]</scope>
</reference>
<reference key="2">
    <citation type="journal article" date="1993" name="Curr. Biol.">
        <title>Mitotic regulation of protein phosphatases by the fission yeast sds22 protein.</title>
        <authorList>
            <person name="Stone E.M."/>
            <person name="Yamano H."/>
            <person name="Kinoshita N."/>
            <person name="Yanagida M."/>
        </authorList>
    </citation>
    <scope>NUCLEOTIDE SEQUENCE [GENOMIC DNA]</scope>
    <scope>CHARACTERIZATION</scope>
</reference>
<reference key="3">
    <citation type="journal article" date="2002" name="Nature">
        <title>The genome sequence of Schizosaccharomyces pombe.</title>
        <authorList>
            <person name="Wood V."/>
            <person name="Gwilliam R."/>
            <person name="Rajandream M.A."/>
            <person name="Lyne M.H."/>
            <person name="Lyne R."/>
            <person name="Stewart A."/>
            <person name="Sgouros J.G."/>
            <person name="Peat N."/>
            <person name="Hayles J."/>
            <person name="Baker S.G."/>
            <person name="Basham D."/>
            <person name="Bowman S."/>
            <person name="Brooks K."/>
            <person name="Brown D."/>
            <person name="Brown S."/>
            <person name="Chillingworth T."/>
            <person name="Churcher C.M."/>
            <person name="Collins M."/>
            <person name="Connor R."/>
            <person name="Cronin A."/>
            <person name="Davis P."/>
            <person name="Feltwell T."/>
            <person name="Fraser A."/>
            <person name="Gentles S."/>
            <person name="Goble A."/>
            <person name="Hamlin N."/>
            <person name="Harris D.E."/>
            <person name="Hidalgo J."/>
            <person name="Hodgson G."/>
            <person name="Holroyd S."/>
            <person name="Hornsby T."/>
            <person name="Howarth S."/>
            <person name="Huckle E.J."/>
            <person name="Hunt S."/>
            <person name="Jagels K."/>
            <person name="James K.D."/>
            <person name="Jones L."/>
            <person name="Jones M."/>
            <person name="Leather S."/>
            <person name="McDonald S."/>
            <person name="McLean J."/>
            <person name="Mooney P."/>
            <person name="Moule S."/>
            <person name="Mungall K.L."/>
            <person name="Murphy L.D."/>
            <person name="Niblett D."/>
            <person name="Odell C."/>
            <person name="Oliver K."/>
            <person name="O'Neil S."/>
            <person name="Pearson D."/>
            <person name="Quail M.A."/>
            <person name="Rabbinowitsch E."/>
            <person name="Rutherford K.M."/>
            <person name="Rutter S."/>
            <person name="Saunders D."/>
            <person name="Seeger K."/>
            <person name="Sharp S."/>
            <person name="Skelton J."/>
            <person name="Simmonds M.N."/>
            <person name="Squares R."/>
            <person name="Squares S."/>
            <person name="Stevens K."/>
            <person name="Taylor K."/>
            <person name="Taylor R.G."/>
            <person name="Tivey A."/>
            <person name="Walsh S.V."/>
            <person name="Warren T."/>
            <person name="Whitehead S."/>
            <person name="Woodward J.R."/>
            <person name="Volckaert G."/>
            <person name="Aert R."/>
            <person name="Robben J."/>
            <person name="Grymonprez B."/>
            <person name="Weltjens I."/>
            <person name="Vanstreels E."/>
            <person name="Rieger M."/>
            <person name="Schaefer M."/>
            <person name="Mueller-Auer S."/>
            <person name="Gabel C."/>
            <person name="Fuchs M."/>
            <person name="Duesterhoeft A."/>
            <person name="Fritzc C."/>
            <person name="Holzer E."/>
            <person name="Moestl D."/>
            <person name="Hilbert H."/>
            <person name="Borzym K."/>
            <person name="Langer I."/>
            <person name="Beck A."/>
            <person name="Lehrach H."/>
            <person name="Reinhardt R."/>
            <person name="Pohl T.M."/>
            <person name="Eger P."/>
            <person name="Zimmermann W."/>
            <person name="Wedler H."/>
            <person name="Wambutt R."/>
            <person name="Purnelle B."/>
            <person name="Goffeau A."/>
            <person name="Cadieu E."/>
            <person name="Dreano S."/>
            <person name="Gloux S."/>
            <person name="Lelaure V."/>
            <person name="Mottier S."/>
            <person name="Galibert F."/>
            <person name="Aves S.J."/>
            <person name="Xiang Z."/>
            <person name="Hunt C."/>
            <person name="Moore K."/>
            <person name="Hurst S.M."/>
            <person name="Lucas M."/>
            <person name="Rochet M."/>
            <person name="Gaillardin C."/>
            <person name="Tallada V.A."/>
            <person name="Garzon A."/>
            <person name="Thode G."/>
            <person name="Daga R.R."/>
            <person name="Cruzado L."/>
            <person name="Jimenez J."/>
            <person name="Sanchez M."/>
            <person name="del Rey F."/>
            <person name="Benito J."/>
            <person name="Dominguez A."/>
            <person name="Revuelta J.L."/>
            <person name="Moreno S."/>
            <person name="Armstrong J."/>
            <person name="Forsburg S.L."/>
            <person name="Cerutti L."/>
            <person name="Lowe T."/>
            <person name="McCombie W.R."/>
            <person name="Paulsen I."/>
            <person name="Potashkin J."/>
            <person name="Shpakovski G.V."/>
            <person name="Ussery D."/>
            <person name="Barrell B.G."/>
            <person name="Nurse P."/>
        </authorList>
    </citation>
    <scope>NUCLEOTIDE SEQUENCE [LARGE SCALE GENOMIC DNA]</scope>
    <source>
        <strain>972 / ATCC 24843</strain>
    </source>
</reference>
<protein>
    <recommendedName>
        <fullName>Protein phosphatase 1 regulatory subunit SDS22</fullName>
    </recommendedName>
</protein>
<sequence length="332" mass="38067">MSNVSSEDGIAPETQLIIDDPDVQQIDADEDLLDDVPDDVDCVELIQSRIQSMASLGLERFKNLQSLCLRQNQIKKIESVPETLTELDLYDNLIVRIENLDNVKNLTYLDLSFNNIKTIRNINHLKGLENLFFVQNRIRRIENLEGLDRLTNLELGGNKIRVIENLDTLVNLEKLWVGKNKITKFENFEKLQKLSLLSIQSNRITQFENLACLSHCLRELYVSHNGLTSFSGIEVLENLEILDVSNNMIKHLSYLAGLKNLVELWASNNELSSFQEIEDELSGLKKLETVYFEGNPLQKTNPAVYRNKVRLCLPQLRQIDATIIPKTSKQFP</sequence>
<comment type="function">
    <text>Essential for the mitotic metaphase/anaphase transition. Positively modulates protein phosphatase-1, possibly by forming a repeating helical rod that is capable of enhancing a PP1-dependent dephosphorylation activity.</text>
</comment>
<comment type="subunit">
    <text>Physically interacts with the dis2 and sds21 phosphatases.</text>
</comment>
<comment type="interaction">
    <interactant intactId="EBI-16132213">
        <id>P22194</id>
    </interactant>
    <interactant intactId="EBI-4320127">
        <id>P13681</id>
        <label>dis2</label>
    </interactant>
    <organismsDiffer>false</organismsDiffer>
    <experiments>3</experiments>
</comment>
<comment type="subcellular location">
    <subcellularLocation>
        <location>Nucleus</location>
    </subcellularLocation>
</comment>
<comment type="PTM">
    <text>Phosphorylated.</text>
</comment>
<comment type="similarity">
    <text evidence="1">Belongs to the SDS22 family.</text>
</comment>
<comment type="sequence caution" evidence="1">
    <conflict type="erroneous initiation">
        <sequence resource="EMBL-CDS" id="AAA35342"/>
    </conflict>
</comment>
<feature type="chain" id="PRO_0000071446" description="Protein phosphatase 1 regulatory subunit SDS22">
    <location>
        <begin position="1"/>
        <end position="332"/>
    </location>
</feature>
<feature type="repeat" description="LRR 1">
    <location>
        <begin position="63"/>
        <end position="82"/>
    </location>
</feature>
<feature type="repeat" description="LRR 2">
    <location>
        <begin position="83"/>
        <end position="104"/>
    </location>
</feature>
<feature type="repeat" description="LRR 3">
    <location>
        <begin position="105"/>
        <end position="126"/>
    </location>
</feature>
<feature type="repeat" description="LRR 4">
    <location>
        <begin position="127"/>
        <end position="148"/>
    </location>
</feature>
<feature type="repeat" description="LRR 5">
    <location>
        <begin position="149"/>
        <end position="170"/>
    </location>
</feature>
<feature type="repeat" description="LRR 6">
    <location>
        <begin position="171"/>
        <end position="192"/>
    </location>
</feature>
<feature type="repeat" description="LRR 7">
    <location>
        <begin position="193"/>
        <end position="214"/>
    </location>
</feature>
<feature type="repeat" description="LRR 8">
    <location>
        <begin position="216"/>
        <end position="237"/>
    </location>
</feature>
<feature type="repeat" description="LRR 9">
    <location>
        <begin position="238"/>
        <end position="259"/>
    </location>
</feature>
<feature type="repeat" description="LRR 10">
    <location>
        <begin position="260"/>
        <end position="281"/>
    </location>
</feature>
<feature type="domain" description="LRRCT">
    <location>
        <begin position="295"/>
        <end position="332"/>
    </location>
</feature>
<proteinExistence type="evidence at protein level"/>